<proteinExistence type="inferred from homology"/>
<sequence length="311" mass="31877">MKVAVLGAAGGIGQALSLLLKTQLPAGSELSLYDVAPVVPGVAVDLSHIPTDVKVAGFGRDDLNGALTGADIVLIPAGMPRKPGMDRADLFNVNAGIIKVLAEGIVASCPKALVGVITNPVNGTVPIVAEVFKKAGTYDAARLFGVTTLDVIRSEAFVAELKGLDVATVKVPVIGGHSGTTILPLLSQVEGATFSDEEVAALTPRIQNAGTEVVEAKAGGGSATLSMGAAAARFCMSLVKGLQGEDVVDYAYVEGNGADAQFFAQPVRLGVNGVSEILPYGELSAFEQKAKEDMLATLKKDIQEGVDFMAS</sequence>
<reference key="1">
    <citation type="journal article" date="2005" name="Proc. Natl. Acad. Sci. U.S.A.">
        <title>The psychrophilic lifestyle as revealed by the genome sequence of Colwellia psychrerythraea 34H through genomic and proteomic analyses.</title>
        <authorList>
            <person name="Methe B.A."/>
            <person name="Nelson K.E."/>
            <person name="Deming J.W."/>
            <person name="Momen B."/>
            <person name="Melamud E."/>
            <person name="Zhang X."/>
            <person name="Moult J."/>
            <person name="Madupu R."/>
            <person name="Nelson W.C."/>
            <person name="Dodson R.J."/>
            <person name="Brinkac L.M."/>
            <person name="Daugherty S.C."/>
            <person name="Durkin A.S."/>
            <person name="DeBoy R.T."/>
            <person name="Kolonay J.F."/>
            <person name="Sullivan S.A."/>
            <person name="Zhou L."/>
            <person name="Davidsen T.M."/>
            <person name="Wu M."/>
            <person name="Huston A.L."/>
            <person name="Lewis M."/>
            <person name="Weaver B."/>
            <person name="Weidman J.F."/>
            <person name="Khouri H."/>
            <person name="Utterback T.R."/>
            <person name="Feldblyum T.V."/>
            <person name="Fraser C.M."/>
        </authorList>
    </citation>
    <scope>NUCLEOTIDE SEQUENCE [LARGE SCALE GENOMIC DNA]</scope>
    <source>
        <strain>34H / ATCC BAA-681</strain>
    </source>
</reference>
<gene>
    <name evidence="1" type="primary">mdh</name>
    <name type="ordered locus">CPS_4514</name>
</gene>
<evidence type="ECO:0000255" key="1">
    <source>
        <dbReference type="HAMAP-Rule" id="MF_01516"/>
    </source>
</evidence>
<accession>Q47VL0</accession>
<dbReference type="EC" id="1.1.1.37" evidence="1"/>
<dbReference type="EMBL" id="CP000083">
    <property type="protein sequence ID" value="AAZ25753.1"/>
    <property type="molecule type" value="Genomic_DNA"/>
</dbReference>
<dbReference type="RefSeq" id="WP_011045243.1">
    <property type="nucleotide sequence ID" value="NC_003910.7"/>
</dbReference>
<dbReference type="SMR" id="Q47VL0"/>
<dbReference type="STRING" id="167879.CPS_4514"/>
<dbReference type="KEGG" id="cps:CPS_4514"/>
<dbReference type="eggNOG" id="COG0039">
    <property type="taxonomic scope" value="Bacteria"/>
</dbReference>
<dbReference type="HOGENOM" id="CLU_047181_1_0_6"/>
<dbReference type="Proteomes" id="UP000000547">
    <property type="component" value="Chromosome"/>
</dbReference>
<dbReference type="GO" id="GO:0005737">
    <property type="term" value="C:cytoplasm"/>
    <property type="evidence" value="ECO:0007669"/>
    <property type="project" value="TreeGrafter"/>
</dbReference>
<dbReference type="GO" id="GO:0030060">
    <property type="term" value="F:L-malate dehydrogenase (NAD+) activity"/>
    <property type="evidence" value="ECO:0007669"/>
    <property type="project" value="UniProtKB-UniRule"/>
</dbReference>
<dbReference type="GO" id="GO:0006108">
    <property type="term" value="P:malate metabolic process"/>
    <property type="evidence" value="ECO:0007669"/>
    <property type="project" value="InterPro"/>
</dbReference>
<dbReference type="GO" id="GO:0006099">
    <property type="term" value="P:tricarboxylic acid cycle"/>
    <property type="evidence" value="ECO:0007669"/>
    <property type="project" value="UniProtKB-UniRule"/>
</dbReference>
<dbReference type="CDD" id="cd01337">
    <property type="entry name" value="MDH_glyoxysomal_mitochondrial"/>
    <property type="match status" value="1"/>
</dbReference>
<dbReference type="FunFam" id="3.40.50.720:FF:000017">
    <property type="entry name" value="Malate dehydrogenase"/>
    <property type="match status" value="1"/>
</dbReference>
<dbReference type="FunFam" id="3.90.110.10:FF:000001">
    <property type="entry name" value="Malate dehydrogenase"/>
    <property type="match status" value="1"/>
</dbReference>
<dbReference type="Gene3D" id="3.90.110.10">
    <property type="entry name" value="Lactate dehydrogenase/glycoside hydrolase, family 4, C-terminal"/>
    <property type="match status" value="1"/>
</dbReference>
<dbReference type="Gene3D" id="3.40.50.720">
    <property type="entry name" value="NAD(P)-binding Rossmann-like Domain"/>
    <property type="match status" value="1"/>
</dbReference>
<dbReference type="HAMAP" id="MF_01516">
    <property type="entry name" value="Malate_dehydrog_1"/>
    <property type="match status" value="1"/>
</dbReference>
<dbReference type="InterPro" id="IPR001557">
    <property type="entry name" value="L-lactate/malate_DH"/>
</dbReference>
<dbReference type="InterPro" id="IPR022383">
    <property type="entry name" value="Lactate/malate_DH_C"/>
</dbReference>
<dbReference type="InterPro" id="IPR001236">
    <property type="entry name" value="Lactate/malate_DH_N"/>
</dbReference>
<dbReference type="InterPro" id="IPR015955">
    <property type="entry name" value="Lactate_DH/Glyco_Ohase_4_C"/>
</dbReference>
<dbReference type="InterPro" id="IPR001252">
    <property type="entry name" value="Malate_DH_AS"/>
</dbReference>
<dbReference type="InterPro" id="IPR010097">
    <property type="entry name" value="Malate_DH_type1"/>
</dbReference>
<dbReference type="InterPro" id="IPR023958">
    <property type="entry name" value="Malate_DH_type1_bac"/>
</dbReference>
<dbReference type="InterPro" id="IPR036291">
    <property type="entry name" value="NAD(P)-bd_dom_sf"/>
</dbReference>
<dbReference type="NCBIfam" id="TIGR01772">
    <property type="entry name" value="MDH_euk_gproteo"/>
    <property type="match status" value="1"/>
</dbReference>
<dbReference type="PANTHER" id="PTHR11540">
    <property type="entry name" value="MALATE AND LACTATE DEHYDROGENASE"/>
    <property type="match status" value="1"/>
</dbReference>
<dbReference type="PANTHER" id="PTHR11540:SF16">
    <property type="entry name" value="MALATE DEHYDROGENASE, MITOCHONDRIAL"/>
    <property type="match status" value="1"/>
</dbReference>
<dbReference type="Pfam" id="PF02866">
    <property type="entry name" value="Ldh_1_C"/>
    <property type="match status" value="1"/>
</dbReference>
<dbReference type="Pfam" id="PF00056">
    <property type="entry name" value="Ldh_1_N"/>
    <property type="match status" value="1"/>
</dbReference>
<dbReference type="PIRSF" id="PIRSF000102">
    <property type="entry name" value="Lac_mal_DH"/>
    <property type="match status" value="1"/>
</dbReference>
<dbReference type="SUPFAM" id="SSF56327">
    <property type="entry name" value="LDH C-terminal domain-like"/>
    <property type="match status" value="1"/>
</dbReference>
<dbReference type="SUPFAM" id="SSF51735">
    <property type="entry name" value="NAD(P)-binding Rossmann-fold domains"/>
    <property type="match status" value="1"/>
</dbReference>
<dbReference type="PROSITE" id="PS00068">
    <property type="entry name" value="MDH"/>
    <property type="match status" value="1"/>
</dbReference>
<name>MDH_COLP3</name>
<comment type="function">
    <text evidence="1">Catalyzes the reversible oxidation of malate to oxaloacetate.</text>
</comment>
<comment type="catalytic activity">
    <reaction evidence="1">
        <text>(S)-malate + NAD(+) = oxaloacetate + NADH + H(+)</text>
        <dbReference type="Rhea" id="RHEA:21432"/>
        <dbReference type="ChEBI" id="CHEBI:15378"/>
        <dbReference type="ChEBI" id="CHEBI:15589"/>
        <dbReference type="ChEBI" id="CHEBI:16452"/>
        <dbReference type="ChEBI" id="CHEBI:57540"/>
        <dbReference type="ChEBI" id="CHEBI:57945"/>
        <dbReference type="EC" id="1.1.1.37"/>
    </reaction>
</comment>
<comment type="subunit">
    <text evidence="1">Homodimer.</text>
</comment>
<comment type="similarity">
    <text evidence="1">Belongs to the LDH/MDH superfamily. MDH type 1 family.</text>
</comment>
<organism>
    <name type="scientific">Colwellia psychrerythraea (strain 34H / ATCC BAA-681)</name>
    <name type="common">Vibrio psychroerythus</name>
    <dbReference type="NCBI Taxonomy" id="167879"/>
    <lineage>
        <taxon>Bacteria</taxon>
        <taxon>Pseudomonadati</taxon>
        <taxon>Pseudomonadota</taxon>
        <taxon>Gammaproteobacteria</taxon>
        <taxon>Alteromonadales</taxon>
        <taxon>Colwelliaceae</taxon>
        <taxon>Colwellia</taxon>
    </lineage>
</organism>
<keyword id="KW-0520">NAD</keyword>
<keyword id="KW-0560">Oxidoreductase</keyword>
<keyword id="KW-0816">Tricarboxylic acid cycle</keyword>
<feature type="chain" id="PRO_0000113300" description="Malate dehydrogenase">
    <location>
        <begin position="1"/>
        <end position="311"/>
    </location>
</feature>
<feature type="active site" description="Proton acceptor" evidence="1">
    <location>
        <position position="177"/>
    </location>
</feature>
<feature type="binding site" evidence="1">
    <location>
        <begin position="7"/>
        <end position="13"/>
    </location>
    <ligand>
        <name>NAD(+)</name>
        <dbReference type="ChEBI" id="CHEBI:57540"/>
    </ligand>
</feature>
<feature type="binding site" evidence="1">
    <location>
        <position position="34"/>
    </location>
    <ligand>
        <name>NAD(+)</name>
        <dbReference type="ChEBI" id="CHEBI:57540"/>
    </ligand>
</feature>
<feature type="binding site" evidence="1">
    <location>
        <position position="81"/>
    </location>
    <ligand>
        <name>substrate</name>
    </ligand>
</feature>
<feature type="binding site" evidence="1">
    <location>
        <position position="87"/>
    </location>
    <ligand>
        <name>substrate</name>
    </ligand>
</feature>
<feature type="binding site" evidence="1">
    <location>
        <position position="94"/>
    </location>
    <ligand>
        <name>NAD(+)</name>
        <dbReference type="ChEBI" id="CHEBI:57540"/>
    </ligand>
</feature>
<feature type="binding site" evidence="1">
    <location>
        <begin position="117"/>
        <end position="119"/>
    </location>
    <ligand>
        <name>NAD(+)</name>
        <dbReference type="ChEBI" id="CHEBI:57540"/>
    </ligand>
</feature>
<feature type="binding site" evidence="1">
    <location>
        <position position="119"/>
    </location>
    <ligand>
        <name>substrate</name>
    </ligand>
</feature>
<feature type="binding site" evidence="1">
    <location>
        <position position="153"/>
    </location>
    <ligand>
        <name>substrate</name>
    </ligand>
</feature>
<feature type="binding site" evidence="1">
    <location>
        <position position="227"/>
    </location>
    <ligand>
        <name>NAD(+)</name>
        <dbReference type="ChEBI" id="CHEBI:57540"/>
    </ligand>
</feature>
<protein>
    <recommendedName>
        <fullName evidence="1">Malate dehydrogenase</fullName>
        <ecNumber evidence="1">1.1.1.37</ecNumber>
    </recommendedName>
</protein>